<protein>
    <recommendedName>
        <fullName evidence="1">Ribosomal RNA large subunit methyltransferase M</fullName>
        <ecNumber evidence="1">2.1.1.186</ecNumber>
    </recommendedName>
    <alternativeName>
        <fullName evidence="1">23S rRNA (cytidine2498-2'-O)-methyltransferase</fullName>
    </alternativeName>
    <alternativeName>
        <fullName evidence="1">23S rRNA 2'-O-ribose methyltransferase RlmM</fullName>
    </alternativeName>
</protein>
<name>RLMM_YERPS</name>
<dbReference type="EC" id="2.1.1.186" evidence="1"/>
<dbReference type="EMBL" id="BX936398">
    <property type="protein sequence ID" value="CAH22253.1"/>
    <property type="molecule type" value="Genomic_DNA"/>
</dbReference>
<dbReference type="RefSeq" id="WP_002212119.1">
    <property type="nucleotide sequence ID" value="NZ_CP009712.1"/>
</dbReference>
<dbReference type="SMR" id="Q667H7"/>
<dbReference type="GeneID" id="57977530"/>
<dbReference type="KEGG" id="ypo:BZ17_3605"/>
<dbReference type="KEGG" id="yps:YPTB3015"/>
<dbReference type="PATRIC" id="fig|273123.14.peg.3785"/>
<dbReference type="Proteomes" id="UP000001011">
    <property type="component" value="Chromosome"/>
</dbReference>
<dbReference type="GO" id="GO:0005737">
    <property type="term" value="C:cytoplasm"/>
    <property type="evidence" value="ECO:0007669"/>
    <property type="project" value="UniProtKB-SubCell"/>
</dbReference>
<dbReference type="GO" id="GO:0008757">
    <property type="term" value="F:S-adenosylmethionine-dependent methyltransferase activity"/>
    <property type="evidence" value="ECO:0007669"/>
    <property type="project" value="UniProtKB-UniRule"/>
</dbReference>
<dbReference type="GO" id="GO:0032259">
    <property type="term" value="P:methylation"/>
    <property type="evidence" value="ECO:0007669"/>
    <property type="project" value="UniProtKB-KW"/>
</dbReference>
<dbReference type="GO" id="GO:0006364">
    <property type="term" value="P:rRNA processing"/>
    <property type="evidence" value="ECO:0007669"/>
    <property type="project" value="UniProtKB-UniRule"/>
</dbReference>
<dbReference type="Gene3D" id="3.30.2300.20">
    <property type="match status" value="1"/>
</dbReference>
<dbReference type="Gene3D" id="3.30.70.2810">
    <property type="match status" value="1"/>
</dbReference>
<dbReference type="Gene3D" id="3.40.50.150">
    <property type="entry name" value="Vaccinia Virus protein VP39"/>
    <property type="match status" value="1"/>
</dbReference>
<dbReference type="HAMAP" id="MF_01551">
    <property type="entry name" value="23SrRNA_methyltr_M"/>
    <property type="match status" value="1"/>
</dbReference>
<dbReference type="InterPro" id="IPR040739">
    <property type="entry name" value="RlmM_FDX"/>
</dbReference>
<dbReference type="InterPro" id="IPR048646">
    <property type="entry name" value="RlmM_THUMP-like"/>
</dbReference>
<dbReference type="InterPro" id="IPR002877">
    <property type="entry name" value="RNA_MeTrfase_FtsJ_dom"/>
</dbReference>
<dbReference type="InterPro" id="IPR011224">
    <property type="entry name" value="rRNA_MeTrfase_M"/>
</dbReference>
<dbReference type="InterPro" id="IPR029063">
    <property type="entry name" value="SAM-dependent_MTases_sf"/>
</dbReference>
<dbReference type="NCBIfam" id="NF008734">
    <property type="entry name" value="PRK11760.1"/>
    <property type="match status" value="1"/>
</dbReference>
<dbReference type="PANTHER" id="PTHR37524">
    <property type="entry name" value="RIBOSOMAL RNA LARGE SUBUNIT METHYLTRANSFERASE M"/>
    <property type="match status" value="1"/>
</dbReference>
<dbReference type="PANTHER" id="PTHR37524:SF2">
    <property type="entry name" value="RIBOSOMAL RNA METHYLTRANSFERASE FTSJ DOMAIN-CONTAINING PROTEIN"/>
    <property type="match status" value="1"/>
</dbReference>
<dbReference type="Pfam" id="PF01728">
    <property type="entry name" value="FtsJ"/>
    <property type="match status" value="1"/>
</dbReference>
<dbReference type="Pfam" id="PF18125">
    <property type="entry name" value="RlmM_FDX"/>
    <property type="match status" value="1"/>
</dbReference>
<dbReference type="Pfam" id="PF21239">
    <property type="entry name" value="RLMM_N"/>
    <property type="match status" value="1"/>
</dbReference>
<dbReference type="PIRSF" id="PIRSF028774">
    <property type="entry name" value="UCP028774"/>
    <property type="match status" value="1"/>
</dbReference>
<dbReference type="SUPFAM" id="SSF53335">
    <property type="entry name" value="S-adenosyl-L-methionine-dependent methyltransferases"/>
    <property type="match status" value="1"/>
</dbReference>
<reference key="1">
    <citation type="journal article" date="2004" name="Proc. Natl. Acad. Sci. U.S.A.">
        <title>Insights into the evolution of Yersinia pestis through whole-genome comparison with Yersinia pseudotuberculosis.</title>
        <authorList>
            <person name="Chain P.S.G."/>
            <person name="Carniel E."/>
            <person name="Larimer F.W."/>
            <person name="Lamerdin J."/>
            <person name="Stoutland P.O."/>
            <person name="Regala W.M."/>
            <person name="Georgescu A.M."/>
            <person name="Vergez L.M."/>
            <person name="Land M.L."/>
            <person name="Motin V.L."/>
            <person name="Brubaker R.R."/>
            <person name="Fowler J."/>
            <person name="Hinnebusch J."/>
            <person name="Marceau M."/>
            <person name="Medigue C."/>
            <person name="Simonet M."/>
            <person name="Chenal-Francisque V."/>
            <person name="Souza B."/>
            <person name="Dacheux D."/>
            <person name="Elliott J.M."/>
            <person name="Derbise A."/>
            <person name="Hauser L.J."/>
            <person name="Garcia E."/>
        </authorList>
    </citation>
    <scope>NUCLEOTIDE SEQUENCE [LARGE SCALE GENOMIC DNA]</scope>
    <source>
        <strain>IP32953</strain>
    </source>
</reference>
<sequence length="368" mass="42307">MNNKIALYCRSGFEKECAAEITEKAAQLEIFGFARVKENSGYVLFECYQLEDADRLIREIPFREFIFARQMMVVGELLKDLPPEDRVSPIVGMLVGVIEKAGELRVEVADTNESKELLKFCRKLTVPLRSALREQKILSARENAHRPVVHVFFIAPGCCYVGYSYSNNNSPFYMGIPRLKFPSDAPSRSTLKLEEAFHVFIPADEWEERLASGMHAVDLGACPGGWTYQLVQRSMMIQAVDNGLMAQSLMDTGQVTHHRADGFKYEPTRSNIYWLVCDMVEKPTKVTQLITKWLVNGWCREAIFNLKLPMKKRYEEVVQNLAMMDEQLKENGINADIHAKQLYHDREEVTVHVRRIWSGAPGRRDERY</sequence>
<keyword id="KW-0963">Cytoplasm</keyword>
<keyword id="KW-0489">Methyltransferase</keyword>
<keyword id="KW-0698">rRNA processing</keyword>
<keyword id="KW-0949">S-adenosyl-L-methionine</keyword>
<keyword id="KW-0808">Transferase</keyword>
<gene>
    <name evidence="1" type="primary">rlmM</name>
    <name type="ordered locus">YPTB3015</name>
</gene>
<accession>Q667H7</accession>
<comment type="function">
    <text evidence="1">Catalyzes the 2'-O-methylation at nucleotide C2498 in 23S rRNA.</text>
</comment>
<comment type="catalytic activity">
    <reaction evidence="1">
        <text>cytidine(2498) in 23S rRNA + S-adenosyl-L-methionine = 2'-O-methylcytidine(2498) in 23S rRNA + S-adenosyl-L-homocysteine + H(+)</text>
        <dbReference type="Rhea" id="RHEA:42788"/>
        <dbReference type="Rhea" id="RHEA-COMP:10244"/>
        <dbReference type="Rhea" id="RHEA-COMP:10245"/>
        <dbReference type="ChEBI" id="CHEBI:15378"/>
        <dbReference type="ChEBI" id="CHEBI:57856"/>
        <dbReference type="ChEBI" id="CHEBI:59789"/>
        <dbReference type="ChEBI" id="CHEBI:74495"/>
        <dbReference type="ChEBI" id="CHEBI:82748"/>
        <dbReference type="EC" id="2.1.1.186"/>
    </reaction>
</comment>
<comment type="subunit">
    <text evidence="1">Monomer.</text>
</comment>
<comment type="subcellular location">
    <subcellularLocation>
        <location evidence="1">Cytoplasm</location>
    </subcellularLocation>
</comment>
<comment type="similarity">
    <text evidence="1">Belongs to the class I-like SAM-binding methyltransferase superfamily. RNA methyltransferase RlmE family. RlmM subfamily.</text>
</comment>
<evidence type="ECO:0000255" key="1">
    <source>
        <dbReference type="HAMAP-Rule" id="MF_01551"/>
    </source>
</evidence>
<feature type="chain" id="PRO_0000070440" description="Ribosomal RNA large subunit methyltransferase M">
    <location>
        <begin position="1"/>
        <end position="368"/>
    </location>
</feature>
<feature type="active site" description="Proton acceptor" evidence="1">
    <location>
        <position position="307"/>
    </location>
</feature>
<feature type="binding site" evidence="1">
    <location>
        <position position="189"/>
    </location>
    <ligand>
        <name>S-adenosyl-L-methionine</name>
        <dbReference type="ChEBI" id="CHEBI:59789"/>
    </ligand>
</feature>
<feature type="binding site" evidence="1">
    <location>
        <begin position="222"/>
        <end position="225"/>
    </location>
    <ligand>
        <name>S-adenosyl-L-methionine</name>
        <dbReference type="ChEBI" id="CHEBI:59789"/>
    </ligand>
</feature>
<feature type="binding site" evidence="1">
    <location>
        <position position="241"/>
    </location>
    <ligand>
        <name>S-adenosyl-L-methionine</name>
        <dbReference type="ChEBI" id="CHEBI:59789"/>
    </ligand>
</feature>
<feature type="binding site" evidence="1">
    <location>
        <position position="261"/>
    </location>
    <ligand>
        <name>S-adenosyl-L-methionine</name>
        <dbReference type="ChEBI" id="CHEBI:59789"/>
    </ligand>
</feature>
<feature type="binding site" evidence="1">
    <location>
        <position position="278"/>
    </location>
    <ligand>
        <name>S-adenosyl-L-methionine</name>
        <dbReference type="ChEBI" id="CHEBI:59789"/>
    </ligand>
</feature>
<proteinExistence type="inferred from homology"/>
<organism>
    <name type="scientific">Yersinia pseudotuberculosis serotype I (strain IP32953)</name>
    <dbReference type="NCBI Taxonomy" id="273123"/>
    <lineage>
        <taxon>Bacteria</taxon>
        <taxon>Pseudomonadati</taxon>
        <taxon>Pseudomonadota</taxon>
        <taxon>Gammaproteobacteria</taxon>
        <taxon>Enterobacterales</taxon>
        <taxon>Yersiniaceae</taxon>
        <taxon>Yersinia</taxon>
    </lineage>
</organism>